<gene>
    <name type="ordered locus">YOR300W</name>
    <name type="ORF">O5639</name>
</gene>
<proteinExistence type="uncertain"/>
<name>YO300_YEAST</name>
<reference key="1">
    <citation type="journal article" date="1997" name="Yeast">
        <title>Sequence and analysis of a 36.2 kb fragment from the right arm of yeast chromosome XV reveals 19 open reading frames including SNF2 (5' end), CPA1, SLY41, a putative transport ATPase, a putative ribosomal protein and an SNF2 homologue.</title>
        <authorList>
            <person name="Poirey R."/>
            <person name="Cziepluch C."/>
            <person name="Tobiasch E."/>
            <person name="Pujol A."/>
            <person name="Kordes E."/>
            <person name="Jauniaux J.-C."/>
        </authorList>
    </citation>
    <scope>NUCLEOTIDE SEQUENCE [GENOMIC DNA]</scope>
    <source>
        <strain>ATCC 96604 / S288c / FY1679</strain>
    </source>
</reference>
<reference key="2">
    <citation type="journal article" date="1997" name="Nature">
        <title>The nucleotide sequence of Saccharomyces cerevisiae chromosome XV.</title>
        <authorList>
            <person name="Dujon B."/>
            <person name="Albermann K."/>
            <person name="Aldea M."/>
            <person name="Alexandraki D."/>
            <person name="Ansorge W."/>
            <person name="Arino J."/>
            <person name="Benes V."/>
            <person name="Bohn C."/>
            <person name="Bolotin-Fukuhara M."/>
            <person name="Bordonne R."/>
            <person name="Boyer J."/>
            <person name="Camasses A."/>
            <person name="Casamayor A."/>
            <person name="Casas C."/>
            <person name="Cheret G."/>
            <person name="Cziepluch C."/>
            <person name="Daignan-Fornier B."/>
            <person name="Dang V.-D."/>
            <person name="de Haan M."/>
            <person name="Delius H."/>
            <person name="Durand P."/>
            <person name="Fairhead C."/>
            <person name="Feldmann H."/>
            <person name="Gaillon L."/>
            <person name="Galisson F."/>
            <person name="Gamo F.-J."/>
            <person name="Gancedo C."/>
            <person name="Goffeau A."/>
            <person name="Goulding S.E."/>
            <person name="Grivell L.A."/>
            <person name="Habbig B."/>
            <person name="Hand N.J."/>
            <person name="Hani J."/>
            <person name="Hattenhorst U."/>
            <person name="Hebling U."/>
            <person name="Hernando Y."/>
            <person name="Herrero E."/>
            <person name="Heumann K."/>
            <person name="Hiesel R."/>
            <person name="Hilger F."/>
            <person name="Hofmann B."/>
            <person name="Hollenberg C.P."/>
            <person name="Hughes B."/>
            <person name="Jauniaux J.-C."/>
            <person name="Kalogeropoulos A."/>
            <person name="Katsoulou C."/>
            <person name="Kordes E."/>
            <person name="Lafuente M.J."/>
            <person name="Landt O."/>
            <person name="Louis E.J."/>
            <person name="Maarse A.C."/>
            <person name="Madania A."/>
            <person name="Mannhaupt G."/>
            <person name="Marck C."/>
            <person name="Martin R.P."/>
            <person name="Mewes H.-W."/>
            <person name="Michaux G."/>
            <person name="Paces V."/>
            <person name="Parle-McDermott A.G."/>
            <person name="Pearson B.M."/>
            <person name="Perrin A."/>
            <person name="Pettersson B."/>
            <person name="Poch O."/>
            <person name="Pohl T.M."/>
            <person name="Poirey R."/>
            <person name="Portetelle D."/>
            <person name="Pujol A."/>
            <person name="Purnelle B."/>
            <person name="Ramezani Rad M."/>
            <person name="Rechmann S."/>
            <person name="Schwager C."/>
            <person name="Schweizer M."/>
            <person name="Sor F."/>
            <person name="Sterky F."/>
            <person name="Tarassov I.A."/>
            <person name="Teodoru C."/>
            <person name="Tettelin H."/>
            <person name="Thierry A."/>
            <person name="Tobiasch E."/>
            <person name="Tzermia M."/>
            <person name="Uhlen M."/>
            <person name="Unseld M."/>
            <person name="Valens M."/>
            <person name="Vandenbol M."/>
            <person name="Vetter I."/>
            <person name="Vlcek C."/>
            <person name="Voet M."/>
            <person name="Volckaert G."/>
            <person name="Voss H."/>
            <person name="Wambutt R."/>
            <person name="Wedler H."/>
            <person name="Wiemann S."/>
            <person name="Winsor B."/>
            <person name="Wolfe K.H."/>
            <person name="Zollner A."/>
            <person name="Zumstein E."/>
            <person name="Kleine K."/>
        </authorList>
    </citation>
    <scope>NUCLEOTIDE SEQUENCE [LARGE SCALE GENOMIC DNA]</scope>
    <source>
        <strain>ATCC 204508 / S288c</strain>
    </source>
</reference>
<reference key="3">
    <citation type="journal article" date="2014" name="G3 (Bethesda)">
        <title>The reference genome sequence of Saccharomyces cerevisiae: Then and now.</title>
        <authorList>
            <person name="Engel S.R."/>
            <person name="Dietrich F.S."/>
            <person name="Fisk D.G."/>
            <person name="Binkley G."/>
            <person name="Balakrishnan R."/>
            <person name="Costanzo M.C."/>
            <person name="Dwight S.S."/>
            <person name="Hitz B.C."/>
            <person name="Karra K."/>
            <person name="Nash R.S."/>
            <person name="Weng S."/>
            <person name="Wong E.D."/>
            <person name="Lloyd P."/>
            <person name="Skrzypek M.S."/>
            <person name="Miyasato S.R."/>
            <person name="Simison M."/>
            <person name="Cherry J.M."/>
        </authorList>
    </citation>
    <scope>GENOME REANNOTATION</scope>
    <source>
        <strain>ATCC 204508 / S288c</strain>
    </source>
</reference>
<reference key="4">
    <citation type="journal article" date="2007" name="Genome Res.">
        <title>Approaching a complete repository of sequence-verified protein-encoding clones for Saccharomyces cerevisiae.</title>
        <authorList>
            <person name="Hu Y."/>
            <person name="Rolfs A."/>
            <person name="Bhullar B."/>
            <person name="Murthy T.V.S."/>
            <person name="Zhu C."/>
            <person name="Berger M.F."/>
            <person name="Camargo A.A."/>
            <person name="Kelley F."/>
            <person name="McCarron S."/>
            <person name="Jepson D."/>
            <person name="Richardson A."/>
            <person name="Raphael J."/>
            <person name="Moreira D."/>
            <person name="Taycher E."/>
            <person name="Zuo D."/>
            <person name="Mohr S."/>
            <person name="Kane M.F."/>
            <person name="Williamson J."/>
            <person name="Simpson A.J.G."/>
            <person name="Bulyk M.L."/>
            <person name="Harlow E."/>
            <person name="Marsischky G."/>
            <person name="Kolodner R.D."/>
            <person name="LaBaer J."/>
        </authorList>
    </citation>
    <scope>NUCLEOTIDE SEQUENCE [GENOMIC DNA]</scope>
    <source>
        <strain>ATCC 204508 / S288c</strain>
    </source>
</reference>
<protein>
    <recommendedName>
        <fullName>Putative uncharacterized protein YOR300W</fullName>
    </recommendedName>
</protein>
<dbReference type="EMBL" id="Z75207">
    <property type="protein sequence ID" value="CAA99529.1"/>
    <property type="molecule type" value="Genomic_DNA"/>
</dbReference>
<dbReference type="EMBL" id="AY693245">
    <property type="protein sequence ID" value="AAT93264.1"/>
    <property type="molecule type" value="Genomic_DNA"/>
</dbReference>
<dbReference type="PIR" id="S67204">
    <property type="entry name" value="S67204"/>
</dbReference>
<dbReference type="DIP" id="DIP-5390N"/>
<dbReference type="STRING" id="4932.YOR300W"/>
<dbReference type="iPTMnet" id="Q08756"/>
<dbReference type="PaxDb" id="4932-YOR300W"/>
<dbReference type="EnsemblFungi" id="YOR300W_mRNA">
    <property type="protein sequence ID" value="YOR300W"/>
    <property type="gene ID" value="YOR300W"/>
</dbReference>
<dbReference type="AGR" id="SGD:S000005826"/>
<dbReference type="SGD" id="S000005826">
    <property type="gene designation" value="YOR300W"/>
</dbReference>
<dbReference type="HOGENOM" id="CLU_2279678_0_0_1"/>
<dbReference type="GO" id="GO:0000282">
    <property type="term" value="P:cellular bud site selection"/>
    <property type="evidence" value="ECO:0007001"/>
    <property type="project" value="SGD"/>
</dbReference>
<dbReference type="GO" id="GO:0030447">
    <property type="term" value="P:filamentous growth"/>
    <property type="evidence" value="ECO:0000315"/>
    <property type="project" value="SGD"/>
</dbReference>
<accession>Q08756</accession>
<feature type="chain" id="PRO_0000299733" description="Putative uncharacterized protein YOR300W">
    <location>
        <begin position="1"/>
        <end position="102"/>
    </location>
</feature>
<organism>
    <name type="scientific">Saccharomyces cerevisiae (strain ATCC 204508 / S288c)</name>
    <name type="common">Baker's yeast</name>
    <dbReference type="NCBI Taxonomy" id="559292"/>
    <lineage>
        <taxon>Eukaryota</taxon>
        <taxon>Fungi</taxon>
        <taxon>Dikarya</taxon>
        <taxon>Ascomycota</taxon>
        <taxon>Saccharomycotina</taxon>
        <taxon>Saccharomycetes</taxon>
        <taxon>Saccharomycetales</taxon>
        <taxon>Saccharomycetaceae</taxon>
        <taxon>Saccharomyces</taxon>
    </lineage>
</organism>
<evidence type="ECO:0000305" key="1"/>
<evidence type="ECO:0000305" key="2">
    <source>
    </source>
</evidence>
<comment type="miscellaneous">
    <text evidence="1">Partially overlaps BUD7.</text>
</comment>
<comment type="caution">
    <text evidence="2">Product of a dubious gene prediction unlikely to encode a functional protein. Because of that it is not part of the S.cerevisiae S288c complete/reference proteome set.</text>
</comment>
<sequence length="102" mass="12216">MKSRQDIQKLFSTWCRRICSISSLLAPLDATMHKYDKKTLIRIYNPKKIGDTLQRCVKLLGHFKENPAYINTEQCWLCNFAARRHSRKNIRVSRMRAKRKYQ</sequence>